<geneLocation type="chloroplast"/>
<reference key="1">
    <citation type="journal article" date="1991" name="Genetics">
        <title>Molecular analysis of the hot spot region related to length mutations in wheat chloroplast DNAs. I. Nucleotide divergence of genes and intergenic spacer regions located in the hot spot region.</title>
        <authorList>
            <person name="Ogihara Y."/>
            <person name="Terachi T."/>
            <person name="Sasakuma T."/>
        </authorList>
    </citation>
    <scope>NUCLEOTIDE SEQUENCE [GENOMIC DNA]</scope>
    <source>
        <strain>cv. Typica</strain>
        <tissue>Seedling</tissue>
    </source>
</reference>
<gene>
    <name type="primary">psaI</name>
</gene>
<protein>
    <recommendedName>
        <fullName>Photosystem I reaction center subunit VIII</fullName>
        <shortName>PSI-I</shortName>
    </recommendedName>
</protein>
<keyword id="KW-0150">Chloroplast</keyword>
<keyword id="KW-0472">Membrane</keyword>
<keyword id="KW-0602">Photosynthesis</keyword>
<keyword id="KW-0603">Photosystem I</keyword>
<keyword id="KW-0934">Plastid</keyword>
<keyword id="KW-0793">Thylakoid</keyword>
<keyword id="KW-0812">Transmembrane</keyword>
<keyword id="KW-1133">Transmembrane helix</keyword>
<accession>P69397</accession>
<accession>P25410</accession>
<feature type="chain" id="PRO_0000194639" description="Photosystem I reaction center subunit VIII">
    <location>
        <begin position="1"/>
        <end position="36"/>
    </location>
</feature>
<feature type="transmembrane region" description="Helical" evidence="2">
    <location>
        <begin position="10"/>
        <end position="30"/>
    </location>
</feature>
<dbReference type="EMBL" id="X62119">
    <property type="protein sequence ID" value="CAA44039.1"/>
    <property type="molecule type" value="Genomic_DNA"/>
</dbReference>
<dbReference type="PIR" id="S17320">
    <property type="entry name" value="S17320"/>
</dbReference>
<dbReference type="RefSeq" id="YP_008474309.1">
    <property type="nucleotide sequence ID" value="NC_022133.1"/>
</dbReference>
<dbReference type="SMR" id="P69397"/>
<dbReference type="GeneID" id="16693640"/>
<dbReference type="GO" id="GO:0009535">
    <property type="term" value="C:chloroplast thylakoid membrane"/>
    <property type="evidence" value="ECO:0007669"/>
    <property type="project" value="UniProtKB-SubCell"/>
</dbReference>
<dbReference type="GO" id="GO:0009522">
    <property type="term" value="C:photosystem I"/>
    <property type="evidence" value="ECO:0007669"/>
    <property type="project" value="UniProtKB-KW"/>
</dbReference>
<dbReference type="GO" id="GO:0015979">
    <property type="term" value="P:photosynthesis"/>
    <property type="evidence" value="ECO:0007669"/>
    <property type="project" value="UniProtKB-UniRule"/>
</dbReference>
<dbReference type="HAMAP" id="MF_00431">
    <property type="entry name" value="PSI_PsaI"/>
    <property type="match status" value="1"/>
</dbReference>
<dbReference type="InterPro" id="IPR001302">
    <property type="entry name" value="PSI_PsaI"/>
</dbReference>
<dbReference type="InterPro" id="IPR036357">
    <property type="entry name" value="PSI_PsaI_sf"/>
</dbReference>
<dbReference type="NCBIfam" id="TIGR03052">
    <property type="entry name" value="PS_I_psaI"/>
    <property type="match status" value="1"/>
</dbReference>
<dbReference type="PANTHER" id="PTHR35775">
    <property type="match status" value="1"/>
</dbReference>
<dbReference type="PANTHER" id="PTHR35775:SF2">
    <property type="entry name" value="PHOTOSYSTEM I REACTION CENTER SUBUNIT VIII"/>
    <property type="match status" value="1"/>
</dbReference>
<dbReference type="Pfam" id="PF00796">
    <property type="entry name" value="PSI_8"/>
    <property type="match status" value="1"/>
</dbReference>
<dbReference type="SUPFAM" id="SSF81540">
    <property type="entry name" value="Subunit VIII of photosystem I reaction centre, PsaI"/>
    <property type="match status" value="1"/>
</dbReference>
<name>PSAI_AEGTA</name>
<sequence>MTDLNLPSIFVPLVGLVFPAIAMTSLFLYVQKNKIV</sequence>
<comment type="function">
    <text evidence="1">May help in the organization of the PsaL subunit.</text>
</comment>
<comment type="subcellular location">
    <subcellularLocation>
        <location evidence="1">Plastid</location>
        <location evidence="1">Chloroplast thylakoid membrane</location>
        <topology evidence="1">Single-pass membrane protein</topology>
    </subcellularLocation>
</comment>
<comment type="similarity">
    <text evidence="3">Belongs to the PsaI family.</text>
</comment>
<proteinExistence type="inferred from homology"/>
<evidence type="ECO:0000250" key="1"/>
<evidence type="ECO:0000255" key="2"/>
<evidence type="ECO:0000305" key="3"/>
<organism>
    <name type="scientific">Aegilops tauschii</name>
    <name type="common">Tausch's goatgrass</name>
    <name type="synonym">Aegilops squarrosa</name>
    <dbReference type="NCBI Taxonomy" id="37682"/>
    <lineage>
        <taxon>Eukaryota</taxon>
        <taxon>Viridiplantae</taxon>
        <taxon>Streptophyta</taxon>
        <taxon>Embryophyta</taxon>
        <taxon>Tracheophyta</taxon>
        <taxon>Spermatophyta</taxon>
        <taxon>Magnoliopsida</taxon>
        <taxon>Liliopsida</taxon>
        <taxon>Poales</taxon>
        <taxon>Poaceae</taxon>
        <taxon>BOP clade</taxon>
        <taxon>Pooideae</taxon>
        <taxon>Triticodae</taxon>
        <taxon>Triticeae</taxon>
        <taxon>Triticinae</taxon>
        <taxon>Aegilops</taxon>
    </lineage>
</organism>